<evidence type="ECO:0000255" key="1">
    <source>
        <dbReference type="HAMAP-Rule" id="MF_01020"/>
    </source>
</evidence>
<organism>
    <name type="scientific">Rhizobium johnstonii (strain DSM 114642 / LMG 32736 / 3841)</name>
    <name type="common">Rhizobium leguminosarum bv. viciae</name>
    <dbReference type="NCBI Taxonomy" id="216596"/>
    <lineage>
        <taxon>Bacteria</taxon>
        <taxon>Pseudomonadati</taxon>
        <taxon>Pseudomonadota</taxon>
        <taxon>Alphaproteobacteria</taxon>
        <taxon>Hyphomicrobiales</taxon>
        <taxon>Rhizobiaceae</taxon>
        <taxon>Rhizobium/Agrobacterium group</taxon>
        <taxon>Rhizobium</taxon>
        <taxon>Rhizobium johnstonii</taxon>
    </lineage>
</organism>
<feature type="chain" id="PRO_1000063378" description="Phosphoribosyl-ATP pyrophosphatase">
    <location>
        <begin position="1"/>
        <end position="107"/>
    </location>
</feature>
<sequence>MSGFSLSDLESIVAERSKAPPEQSWTAKLVAGGQPKAAKKLGEEAIEAVMAAVTGDRDNLTYEAADVLYHLLVVLKIAEIPLENVMAELERRTAQSGLKEKASRQSS</sequence>
<comment type="catalytic activity">
    <reaction evidence="1">
        <text>1-(5-phospho-beta-D-ribosyl)-ATP + H2O = 1-(5-phospho-beta-D-ribosyl)-5'-AMP + diphosphate + H(+)</text>
        <dbReference type="Rhea" id="RHEA:22828"/>
        <dbReference type="ChEBI" id="CHEBI:15377"/>
        <dbReference type="ChEBI" id="CHEBI:15378"/>
        <dbReference type="ChEBI" id="CHEBI:33019"/>
        <dbReference type="ChEBI" id="CHEBI:59457"/>
        <dbReference type="ChEBI" id="CHEBI:73183"/>
        <dbReference type="EC" id="3.6.1.31"/>
    </reaction>
</comment>
<comment type="pathway">
    <text evidence="1">Amino-acid biosynthesis; L-histidine biosynthesis; L-histidine from 5-phospho-alpha-D-ribose 1-diphosphate: step 2/9.</text>
</comment>
<comment type="subcellular location">
    <subcellularLocation>
        <location evidence="1">Cytoplasm</location>
    </subcellularLocation>
</comment>
<comment type="similarity">
    <text evidence="1">Belongs to the PRA-PH family.</text>
</comment>
<accession>Q1MNF9</accession>
<name>HIS2_RHIJ3</name>
<proteinExistence type="inferred from homology"/>
<reference key="1">
    <citation type="journal article" date="2006" name="Genome Biol.">
        <title>The genome of Rhizobium leguminosarum has recognizable core and accessory components.</title>
        <authorList>
            <person name="Young J.P.W."/>
            <person name="Crossman L.C."/>
            <person name="Johnston A.W.B."/>
            <person name="Thomson N.R."/>
            <person name="Ghazoui Z.F."/>
            <person name="Hull K.H."/>
            <person name="Wexler M."/>
            <person name="Curson A.R.J."/>
            <person name="Todd J.D."/>
            <person name="Poole P.S."/>
            <person name="Mauchline T.H."/>
            <person name="East A.K."/>
            <person name="Quail M.A."/>
            <person name="Churcher C."/>
            <person name="Arrowsmith C."/>
            <person name="Cherevach I."/>
            <person name="Chillingworth T."/>
            <person name="Clarke K."/>
            <person name="Cronin A."/>
            <person name="Davis P."/>
            <person name="Fraser A."/>
            <person name="Hance Z."/>
            <person name="Hauser H."/>
            <person name="Jagels K."/>
            <person name="Moule S."/>
            <person name="Mungall K."/>
            <person name="Norbertczak H."/>
            <person name="Rabbinowitsch E."/>
            <person name="Sanders M."/>
            <person name="Simmonds M."/>
            <person name="Whitehead S."/>
            <person name="Parkhill J."/>
        </authorList>
    </citation>
    <scope>NUCLEOTIDE SEQUENCE [LARGE SCALE GENOMIC DNA]</scope>
    <source>
        <strain>DSM 114642 / LMG 32736 / 3841</strain>
    </source>
</reference>
<dbReference type="EC" id="3.6.1.31" evidence="1"/>
<dbReference type="EMBL" id="AM236080">
    <property type="protein sequence ID" value="CAK05529.1"/>
    <property type="molecule type" value="Genomic_DNA"/>
</dbReference>
<dbReference type="RefSeq" id="WP_011649866.1">
    <property type="nucleotide sequence ID" value="NC_008380.1"/>
</dbReference>
<dbReference type="SMR" id="Q1MNF9"/>
<dbReference type="EnsemblBacteria" id="CAK05529">
    <property type="protein sequence ID" value="CAK05529"/>
    <property type="gene ID" value="RL0041"/>
</dbReference>
<dbReference type="KEGG" id="rle:RL0041"/>
<dbReference type="eggNOG" id="COG0140">
    <property type="taxonomic scope" value="Bacteria"/>
</dbReference>
<dbReference type="HOGENOM" id="CLU_123337_1_1_5"/>
<dbReference type="UniPathway" id="UPA00031">
    <property type="reaction ID" value="UER00007"/>
</dbReference>
<dbReference type="Proteomes" id="UP000006575">
    <property type="component" value="Chromosome"/>
</dbReference>
<dbReference type="GO" id="GO:0005737">
    <property type="term" value="C:cytoplasm"/>
    <property type="evidence" value="ECO:0007669"/>
    <property type="project" value="UniProtKB-SubCell"/>
</dbReference>
<dbReference type="GO" id="GO:0005524">
    <property type="term" value="F:ATP binding"/>
    <property type="evidence" value="ECO:0007669"/>
    <property type="project" value="UniProtKB-KW"/>
</dbReference>
<dbReference type="GO" id="GO:0004636">
    <property type="term" value="F:phosphoribosyl-ATP diphosphatase activity"/>
    <property type="evidence" value="ECO:0007669"/>
    <property type="project" value="UniProtKB-UniRule"/>
</dbReference>
<dbReference type="GO" id="GO:0000105">
    <property type="term" value="P:L-histidine biosynthetic process"/>
    <property type="evidence" value="ECO:0007669"/>
    <property type="project" value="UniProtKB-UniRule"/>
</dbReference>
<dbReference type="CDD" id="cd11534">
    <property type="entry name" value="NTP-PPase_HisIE_like"/>
    <property type="match status" value="1"/>
</dbReference>
<dbReference type="Gene3D" id="1.10.287.1080">
    <property type="entry name" value="MazG-like"/>
    <property type="match status" value="1"/>
</dbReference>
<dbReference type="HAMAP" id="MF_01020">
    <property type="entry name" value="HisE"/>
    <property type="match status" value="1"/>
</dbReference>
<dbReference type="InterPro" id="IPR008179">
    <property type="entry name" value="HisE"/>
</dbReference>
<dbReference type="InterPro" id="IPR021130">
    <property type="entry name" value="PRib-ATP_PPHydrolase-like"/>
</dbReference>
<dbReference type="NCBIfam" id="TIGR03188">
    <property type="entry name" value="histidine_hisI"/>
    <property type="match status" value="1"/>
</dbReference>
<dbReference type="NCBIfam" id="NF001611">
    <property type="entry name" value="PRK00400.1-3"/>
    <property type="match status" value="1"/>
</dbReference>
<dbReference type="NCBIfam" id="NF001613">
    <property type="entry name" value="PRK00400.1-5"/>
    <property type="match status" value="1"/>
</dbReference>
<dbReference type="PANTHER" id="PTHR42945">
    <property type="entry name" value="HISTIDINE BIOSYNTHESIS BIFUNCTIONAL PROTEIN"/>
    <property type="match status" value="1"/>
</dbReference>
<dbReference type="PANTHER" id="PTHR42945:SF9">
    <property type="entry name" value="HISTIDINE BIOSYNTHESIS BIFUNCTIONAL PROTEIN HISIE"/>
    <property type="match status" value="1"/>
</dbReference>
<dbReference type="Pfam" id="PF01503">
    <property type="entry name" value="PRA-PH"/>
    <property type="match status" value="1"/>
</dbReference>
<dbReference type="SUPFAM" id="SSF101386">
    <property type="entry name" value="all-alpha NTP pyrophosphatases"/>
    <property type="match status" value="1"/>
</dbReference>
<keyword id="KW-0028">Amino-acid biosynthesis</keyword>
<keyword id="KW-0067">ATP-binding</keyword>
<keyword id="KW-0963">Cytoplasm</keyword>
<keyword id="KW-0368">Histidine biosynthesis</keyword>
<keyword id="KW-0378">Hydrolase</keyword>
<keyword id="KW-0547">Nucleotide-binding</keyword>
<gene>
    <name evidence="1" type="primary">hisE</name>
    <name type="ordered locus">RL0041</name>
</gene>
<protein>
    <recommendedName>
        <fullName evidence="1">Phosphoribosyl-ATP pyrophosphatase</fullName>
        <shortName evidence="1">PRA-PH</shortName>
        <ecNumber evidence="1">3.6.1.31</ecNumber>
    </recommendedName>
</protein>